<comment type="similarity">
    <text evidence="2">Belongs to the UPF0328 family.</text>
</comment>
<name>Y603_ENCCU</name>
<evidence type="ECO:0000256" key="1">
    <source>
        <dbReference type="SAM" id="MobiDB-lite"/>
    </source>
</evidence>
<evidence type="ECO:0000305" key="2"/>
<keyword id="KW-1185">Reference proteome</keyword>
<reference key="1">
    <citation type="journal article" date="2001" name="Nature">
        <title>Genome sequence and gene compaction of the eukaryote parasite Encephalitozoon cuniculi.</title>
        <authorList>
            <person name="Katinka M.D."/>
            <person name="Duprat S."/>
            <person name="Cornillot E."/>
            <person name="Metenier G."/>
            <person name="Thomarat F."/>
            <person name="Prensier G."/>
            <person name="Barbe V."/>
            <person name="Peyretaillade E."/>
            <person name="Brottier P."/>
            <person name="Wincker P."/>
            <person name="Delbac F."/>
            <person name="El Alaoui H."/>
            <person name="Peyret P."/>
            <person name="Saurin W."/>
            <person name="Gouy M."/>
            <person name="Weissenbach J."/>
            <person name="Vivares C.P."/>
        </authorList>
    </citation>
    <scope>NUCLEOTIDE SEQUENCE [LARGE SCALE GENOMIC DNA]</scope>
    <source>
        <strain>GB-M1</strain>
    </source>
</reference>
<protein>
    <recommendedName>
        <fullName>UPF0328 protein ECU06_0030/ECU06_1690/ECU11_0020</fullName>
    </recommendedName>
</protein>
<proteinExistence type="inferred from homology"/>
<dbReference type="EMBL" id="AL590446">
    <property type="protein sequence ID" value="CAD25363.1"/>
    <property type="molecule type" value="Genomic_DNA"/>
</dbReference>
<dbReference type="EMBL" id="AL590446">
    <property type="protein sequence ID" value="CAD25530.1"/>
    <property type="molecule type" value="Genomic_DNA"/>
</dbReference>
<dbReference type="EMBL" id="AL590450">
    <property type="protein sequence ID" value="CAD25912.1"/>
    <property type="molecule type" value="Genomic_DNA"/>
</dbReference>
<dbReference type="RefSeq" id="NP_585759.1">
    <property type="nucleotide sequence ID" value="NM_001041381.1"/>
</dbReference>
<dbReference type="RefSeq" id="NP_585926.1">
    <property type="nucleotide sequence ID" value="NM_001041548.1"/>
</dbReference>
<dbReference type="RefSeq" id="NP_586308.1">
    <property type="nucleotide sequence ID" value="NM_001042141.1"/>
</dbReference>
<dbReference type="GeneID" id="859182"/>
<dbReference type="GeneID" id="859354"/>
<dbReference type="GeneID" id="859959"/>
<dbReference type="KEGG" id="ecu:ECU06_0030"/>
<dbReference type="KEGG" id="ecu:ECU06_1690"/>
<dbReference type="KEGG" id="ecu:ECU11_0020"/>
<dbReference type="VEuPathDB" id="MicrosporidiaDB:ECU06_0030"/>
<dbReference type="VEuPathDB" id="MicrosporidiaDB:ECU06_1690"/>
<dbReference type="VEuPathDB" id="MicrosporidiaDB:ECU11_0020"/>
<dbReference type="HOGENOM" id="CLU_1120174_0_0_1"/>
<dbReference type="InParanoid" id="Q8STJ4"/>
<dbReference type="Proteomes" id="UP000000819">
    <property type="component" value="Chromosome VI"/>
</dbReference>
<dbReference type="Proteomes" id="UP000000819">
    <property type="component" value="Chromosome XI"/>
</dbReference>
<dbReference type="InterPro" id="IPR019081">
    <property type="entry name" value="UPF0328"/>
</dbReference>
<dbReference type="Pfam" id="PF09591">
    <property type="entry name" value="DUF2463"/>
    <property type="match status" value="1"/>
</dbReference>
<organism>
    <name type="scientific">Encephalitozoon cuniculi (strain GB-M1)</name>
    <name type="common">Microsporidian parasite</name>
    <dbReference type="NCBI Taxonomy" id="284813"/>
    <lineage>
        <taxon>Eukaryota</taxon>
        <taxon>Fungi</taxon>
        <taxon>Fungi incertae sedis</taxon>
        <taxon>Microsporidia</taxon>
        <taxon>Unikaryonidae</taxon>
        <taxon>Encephalitozoon</taxon>
    </lineage>
</organism>
<gene>
    <name type="ordered locus">ECU06_0030</name>
</gene>
<gene>
    <name type="ordered locus">ECU06_1690</name>
</gene>
<gene>
    <name type="ordered locus">ECU11_0020</name>
</gene>
<accession>Q8STJ4</accession>
<sequence>MVRHSKNILPKTTNPNPESNRYPPHPADPSHPSRYHLHLQAHHLRSPLLSASAENRRRDPQNLSTTKATSPSTHQSPILPDDIHSILPFAHMNITHTTGQHTENSIRAPSSTTILWHSCQLHSQPSSISSSTKIVSGRVLFSDSSPCSSNPHTQQPSIFSCPTLAGRKLESSGSIFLSTTLPSFIVSIVYLLSVSCRLVPGQTAFTNTNSSVLIDIPILLCSVGSLSLILKEPKYRSYLAIVSPTLSC</sequence>
<feature type="chain" id="PRO_0000223130" description="UPF0328 protein ECU06_0030/ECU06_1690/ECU11_0020">
    <location>
        <begin position="1"/>
        <end position="248"/>
    </location>
</feature>
<feature type="region of interest" description="Disordered" evidence="1">
    <location>
        <begin position="1"/>
        <end position="34"/>
    </location>
</feature>
<feature type="region of interest" description="Disordered" evidence="1">
    <location>
        <begin position="51"/>
        <end position="81"/>
    </location>
</feature>
<feature type="compositionally biased region" description="Polar residues" evidence="1">
    <location>
        <begin position="10"/>
        <end position="19"/>
    </location>
</feature>
<feature type="compositionally biased region" description="Polar residues" evidence="1">
    <location>
        <begin position="61"/>
        <end position="76"/>
    </location>
</feature>